<reference key="1">
    <citation type="submission" date="2007-09" db="EMBL/GenBank/DDBJ databases">
        <title>Complete genome sequence of Rickettsia akari.</title>
        <authorList>
            <person name="Madan A."/>
            <person name="Fahey J."/>
            <person name="Helton E."/>
            <person name="Ketteman M."/>
            <person name="Madan A."/>
            <person name="Rodrigues S."/>
            <person name="Sanchez A."/>
            <person name="Whiting M."/>
            <person name="Dasch G."/>
            <person name="Eremeeva M."/>
        </authorList>
    </citation>
    <scope>NUCLEOTIDE SEQUENCE [LARGE SCALE GENOMIC DNA]</scope>
    <source>
        <strain>Hartford</strain>
    </source>
</reference>
<keyword id="KW-0687">Ribonucleoprotein</keyword>
<keyword id="KW-0689">Ribosomal protein</keyword>
<keyword id="KW-0694">RNA-binding</keyword>
<keyword id="KW-0699">rRNA-binding</keyword>
<feature type="chain" id="PRO_1000051945" description="Large ribosomal subunit protein uL2">
    <location>
        <begin position="1"/>
        <end position="273"/>
    </location>
</feature>
<feature type="region of interest" description="Disordered" evidence="2">
    <location>
        <begin position="228"/>
        <end position="273"/>
    </location>
</feature>
<feature type="compositionally biased region" description="Basic residues" evidence="2">
    <location>
        <begin position="254"/>
        <end position="273"/>
    </location>
</feature>
<sequence>MALRNFNPITPSLRELVQVDRTSLWKGRPLKSLTKGISKTGGRNNQGRITSWHRGGGHKKLYRIIDFKRNKIDISAVVERIEYDPNRTAFIALIKYEDGEYSYILAPQKLSVGDRVMSSQDADIKIGNCLPLKFIPVGTTLHNVEMKVGKGGQIARSAGTSVDLVGKDSGYAQIKLRSGEFRLVPLDCKATIGSISNPDRKNINLGKAGRNRWLGWRPHVRGVAMNPVDHPHGGGEGKTSGGRHPVTPWGFPTKGKKTRKNKRTSKFIVKKRK</sequence>
<comment type="function">
    <text evidence="1">One of the primary rRNA binding proteins. Required for association of the 30S and 50S subunits to form the 70S ribosome, for tRNA binding and peptide bond formation. It has been suggested to have peptidyltransferase activity; this is somewhat controversial. Makes several contacts with the 16S rRNA in the 70S ribosome.</text>
</comment>
<comment type="subunit">
    <text evidence="1">Part of the 50S ribosomal subunit. Forms a bridge to the 30S subunit in the 70S ribosome.</text>
</comment>
<comment type="similarity">
    <text evidence="1">Belongs to the universal ribosomal protein uL2 family.</text>
</comment>
<evidence type="ECO:0000255" key="1">
    <source>
        <dbReference type="HAMAP-Rule" id="MF_01320"/>
    </source>
</evidence>
<evidence type="ECO:0000256" key="2">
    <source>
        <dbReference type="SAM" id="MobiDB-lite"/>
    </source>
</evidence>
<evidence type="ECO:0000305" key="3"/>
<accession>A8GPE7</accession>
<protein>
    <recommendedName>
        <fullName evidence="1">Large ribosomal subunit protein uL2</fullName>
    </recommendedName>
    <alternativeName>
        <fullName evidence="3">50S ribosomal protein L2</fullName>
    </alternativeName>
</protein>
<dbReference type="EMBL" id="CP000847">
    <property type="protein sequence ID" value="ABV75272.1"/>
    <property type="molecule type" value="Genomic_DNA"/>
</dbReference>
<dbReference type="RefSeq" id="WP_012149902.1">
    <property type="nucleotide sequence ID" value="NC_009881.1"/>
</dbReference>
<dbReference type="SMR" id="A8GPE7"/>
<dbReference type="STRING" id="293614.A1C_05090"/>
<dbReference type="KEGG" id="rak:A1C_05090"/>
<dbReference type="eggNOG" id="COG0090">
    <property type="taxonomic scope" value="Bacteria"/>
</dbReference>
<dbReference type="HOGENOM" id="CLU_036235_2_1_5"/>
<dbReference type="Proteomes" id="UP000006830">
    <property type="component" value="Chromosome"/>
</dbReference>
<dbReference type="GO" id="GO:0015934">
    <property type="term" value="C:large ribosomal subunit"/>
    <property type="evidence" value="ECO:0007669"/>
    <property type="project" value="InterPro"/>
</dbReference>
<dbReference type="GO" id="GO:0019843">
    <property type="term" value="F:rRNA binding"/>
    <property type="evidence" value="ECO:0007669"/>
    <property type="project" value="UniProtKB-UniRule"/>
</dbReference>
<dbReference type="GO" id="GO:0003735">
    <property type="term" value="F:structural constituent of ribosome"/>
    <property type="evidence" value="ECO:0007669"/>
    <property type="project" value="InterPro"/>
</dbReference>
<dbReference type="GO" id="GO:0016740">
    <property type="term" value="F:transferase activity"/>
    <property type="evidence" value="ECO:0007669"/>
    <property type="project" value="InterPro"/>
</dbReference>
<dbReference type="GO" id="GO:0006412">
    <property type="term" value="P:translation"/>
    <property type="evidence" value="ECO:0007669"/>
    <property type="project" value="UniProtKB-UniRule"/>
</dbReference>
<dbReference type="FunFam" id="2.30.30.30:FF:000001">
    <property type="entry name" value="50S ribosomal protein L2"/>
    <property type="match status" value="1"/>
</dbReference>
<dbReference type="FunFam" id="2.40.50.140:FF:000003">
    <property type="entry name" value="50S ribosomal protein L2"/>
    <property type="match status" value="1"/>
</dbReference>
<dbReference type="FunFam" id="4.10.950.10:FF:000001">
    <property type="entry name" value="50S ribosomal protein L2"/>
    <property type="match status" value="1"/>
</dbReference>
<dbReference type="Gene3D" id="2.30.30.30">
    <property type="match status" value="1"/>
</dbReference>
<dbReference type="Gene3D" id="2.40.50.140">
    <property type="entry name" value="Nucleic acid-binding proteins"/>
    <property type="match status" value="1"/>
</dbReference>
<dbReference type="Gene3D" id="4.10.950.10">
    <property type="entry name" value="Ribosomal protein L2, domain 3"/>
    <property type="match status" value="1"/>
</dbReference>
<dbReference type="HAMAP" id="MF_01320_B">
    <property type="entry name" value="Ribosomal_uL2_B"/>
    <property type="match status" value="1"/>
</dbReference>
<dbReference type="InterPro" id="IPR012340">
    <property type="entry name" value="NA-bd_OB-fold"/>
</dbReference>
<dbReference type="InterPro" id="IPR014722">
    <property type="entry name" value="Rib_uL2_dom2"/>
</dbReference>
<dbReference type="InterPro" id="IPR002171">
    <property type="entry name" value="Ribosomal_uL2"/>
</dbReference>
<dbReference type="InterPro" id="IPR005880">
    <property type="entry name" value="Ribosomal_uL2_bac/org-type"/>
</dbReference>
<dbReference type="InterPro" id="IPR022669">
    <property type="entry name" value="Ribosomal_uL2_C"/>
</dbReference>
<dbReference type="InterPro" id="IPR022671">
    <property type="entry name" value="Ribosomal_uL2_CS"/>
</dbReference>
<dbReference type="InterPro" id="IPR014726">
    <property type="entry name" value="Ribosomal_uL2_dom3"/>
</dbReference>
<dbReference type="InterPro" id="IPR022666">
    <property type="entry name" value="Ribosomal_uL2_RNA-bd_dom"/>
</dbReference>
<dbReference type="InterPro" id="IPR008991">
    <property type="entry name" value="Translation_prot_SH3-like_sf"/>
</dbReference>
<dbReference type="NCBIfam" id="TIGR01171">
    <property type="entry name" value="rplB_bact"/>
    <property type="match status" value="1"/>
</dbReference>
<dbReference type="PANTHER" id="PTHR13691:SF5">
    <property type="entry name" value="LARGE RIBOSOMAL SUBUNIT PROTEIN UL2M"/>
    <property type="match status" value="1"/>
</dbReference>
<dbReference type="PANTHER" id="PTHR13691">
    <property type="entry name" value="RIBOSOMAL PROTEIN L2"/>
    <property type="match status" value="1"/>
</dbReference>
<dbReference type="Pfam" id="PF00181">
    <property type="entry name" value="Ribosomal_L2"/>
    <property type="match status" value="1"/>
</dbReference>
<dbReference type="Pfam" id="PF03947">
    <property type="entry name" value="Ribosomal_L2_C"/>
    <property type="match status" value="1"/>
</dbReference>
<dbReference type="PIRSF" id="PIRSF002158">
    <property type="entry name" value="Ribosomal_L2"/>
    <property type="match status" value="1"/>
</dbReference>
<dbReference type="SMART" id="SM01383">
    <property type="entry name" value="Ribosomal_L2"/>
    <property type="match status" value="1"/>
</dbReference>
<dbReference type="SMART" id="SM01382">
    <property type="entry name" value="Ribosomal_L2_C"/>
    <property type="match status" value="1"/>
</dbReference>
<dbReference type="SUPFAM" id="SSF50249">
    <property type="entry name" value="Nucleic acid-binding proteins"/>
    <property type="match status" value="1"/>
</dbReference>
<dbReference type="SUPFAM" id="SSF50104">
    <property type="entry name" value="Translation proteins SH3-like domain"/>
    <property type="match status" value="1"/>
</dbReference>
<dbReference type="PROSITE" id="PS00467">
    <property type="entry name" value="RIBOSOMAL_L2"/>
    <property type="match status" value="1"/>
</dbReference>
<organism>
    <name type="scientific">Rickettsia akari (strain Hartford)</name>
    <dbReference type="NCBI Taxonomy" id="293614"/>
    <lineage>
        <taxon>Bacteria</taxon>
        <taxon>Pseudomonadati</taxon>
        <taxon>Pseudomonadota</taxon>
        <taxon>Alphaproteobacteria</taxon>
        <taxon>Rickettsiales</taxon>
        <taxon>Rickettsiaceae</taxon>
        <taxon>Rickettsieae</taxon>
        <taxon>Rickettsia</taxon>
        <taxon>spotted fever group</taxon>
    </lineage>
</organism>
<gene>
    <name evidence="1" type="primary">rplB</name>
    <name type="ordered locus">A1C_05090</name>
</gene>
<proteinExistence type="inferred from homology"/>
<name>RL2_RICAH</name>